<dbReference type="EMBL" id="X62539">
    <property type="protein sequence ID" value="CAA44407.1"/>
    <property type="molecule type" value="Genomic_DNA"/>
</dbReference>
<dbReference type="EMBL" id="D26185">
    <property type="protein sequence ID" value="BAA05228.1"/>
    <property type="molecule type" value="Genomic_DNA"/>
</dbReference>
<dbReference type="EMBL" id="AL009126">
    <property type="protein sequence ID" value="CAB16135.2"/>
    <property type="molecule type" value="Genomic_DNA"/>
</dbReference>
<dbReference type="PIR" id="I40443">
    <property type="entry name" value="I40443"/>
</dbReference>
<dbReference type="RefSeq" id="NP_391978.2">
    <property type="nucleotide sequence ID" value="NC_000964.3"/>
</dbReference>
<dbReference type="RefSeq" id="WP_003244005.1">
    <property type="nucleotide sequence ID" value="NZ_OZ025638.1"/>
</dbReference>
<dbReference type="SMR" id="P37523"/>
<dbReference type="FunCoup" id="P37523">
    <property type="interactions" value="12"/>
</dbReference>
<dbReference type="STRING" id="224308.BSU40980"/>
<dbReference type="PaxDb" id="224308-BSU40980"/>
<dbReference type="EnsemblBacteria" id="CAB16135">
    <property type="protein sequence ID" value="CAB16135"/>
    <property type="gene ID" value="BSU_40980"/>
</dbReference>
<dbReference type="GeneID" id="937929"/>
<dbReference type="KEGG" id="bsu:BSU40980"/>
<dbReference type="PATRIC" id="fig|224308.179.peg.4440"/>
<dbReference type="eggNOG" id="ENOG5032VFE">
    <property type="taxonomic scope" value="Bacteria"/>
</dbReference>
<dbReference type="InParanoid" id="P37523"/>
<dbReference type="OrthoDB" id="2436858at2"/>
<dbReference type="BioCyc" id="BSUB:BSU40980-MONOMER"/>
<dbReference type="Proteomes" id="UP000001570">
    <property type="component" value="Chromosome"/>
</dbReference>
<dbReference type="GO" id="GO:0030153">
    <property type="term" value="P:bacteriocin immunity"/>
    <property type="evidence" value="ECO:0007669"/>
    <property type="project" value="InterPro"/>
</dbReference>
<dbReference type="InterPro" id="IPR009589">
    <property type="entry name" value="PH_YyaB-like"/>
</dbReference>
<dbReference type="Pfam" id="PF06713">
    <property type="entry name" value="bPH_4"/>
    <property type="match status" value="1"/>
</dbReference>
<sequence length="146" mass="16894">MVYQTKRDVPVTLMIVFLILLIQADAIVPFVLGNMRVSGWIIFILLTLLNGLIIWSFIDLKYVLKEHHLIIKAGLIKHQIPYENIDKVVQKKKLWSGFRLIGSRHAITIYYQGGWGHAVISPQKSEEFIHKLKEKNSNIIIFTKSK</sequence>
<proteinExistence type="predicted"/>
<name>YYAB_BACSU</name>
<feature type="chain" id="PRO_0000050048" description="Uncharacterized protein YyaB">
    <location>
        <begin position="1"/>
        <end position="146"/>
    </location>
</feature>
<feature type="sequence conflict" description="In Ref. 1; CAA44407 and 2; BAA05228." evidence="1" ref="1 2">
    <original>G</original>
    <variation>R</variation>
    <location>
        <position position="102"/>
    </location>
</feature>
<organism>
    <name type="scientific">Bacillus subtilis (strain 168)</name>
    <dbReference type="NCBI Taxonomy" id="224308"/>
    <lineage>
        <taxon>Bacteria</taxon>
        <taxon>Bacillati</taxon>
        <taxon>Bacillota</taxon>
        <taxon>Bacilli</taxon>
        <taxon>Bacillales</taxon>
        <taxon>Bacillaceae</taxon>
        <taxon>Bacillus</taxon>
    </lineage>
</organism>
<protein>
    <recommendedName>
        <fullName>Uncharacterized protein YyaB</fullName>
    </recommendedName>
</protein>
<gene>
    <name type="primary">yyaB</name>
    <name type="ordered locus">BSU40980</name>
</gene>
<keyword id="KW-1185">Reference proteome</keyword>
<reference key="1">
    <citation type="journal article" date="1992" name="Mol. Microbiol.">
        <title>Genes and their organization in the replication origin region of the bacterial chromosome.</title>
        <authorList>
            <person name="Ogasawara N."/>
            <person name="Yoshikawa H."/>
        </authorList>
    </citation>
    <scope>NUCLEOTIDE SEQUENCE [GENOMIC DNA]</scope>
    <source>
        <strain>168 / CRK2000</strain>
    </source>
</reference>
<reference key="2">
    <citation type="journal article" date="1994" name="DNA Res.">
        <title>Systematic sequencing of the 180 kilobase region of the Bacillus subtilis chromosome containing the replication origin.</title>
        <authorList>
            <person name="Ogasawara N."/>
            <person name="Nakai S."/>
            <person name="Yoshikawa H."/>
        </authorList>
    </citation>
    <scope>NUCLEOTIDE SEQUENCE [GENOMIC DNA]</scope>
    <source>
        <strain>168</strain>
    </source>
</reference>
<reference key="3">
    <citation type="journal article" date="1997" name="Nature">
        <title>The complete genome sequence of the Gram-positive bacterium Bacillus subtilis.</title>
        <authorList>
            <person name="Kunst F."/>
            <person name="Ogasawara N."/>
            <person name="Moszer I."/>
            <person name="Albertini A.M."/>
            <person name="Alloni G."/>
            <person name="Azevedo V."/>
            <person name="Bertero M.G."/>
            <person name="Bessieres P."/>
            <person name="Bolotin A."/>
            <person name="Borchert S."/>
            <person name="Borriss R."/>
            <person name="Boursier L."/>
            <person name="Brans A."/>
            <person name="Braun M."/>
            <person name="Brignell S.C."/>
            <person name="Bron S."/>
            <person name="Brouillet S."/>
            <person name="Bruschi C.V."/>
            <person name="Caldwell B."/>
            <person name="Capuano V."/>
            <person name="Carter N.M."/>
            <person name="Choi S.-K."/>
            <person name="Codani J.-J."/>
            <person name="Connerton I.F."/>
            <person name="Cummings N.J."/>
            <person name="Daniel R.A."/>
            <person name="Denizot F."/>
            <person name="Devine K.M."/>
            <person name="Duesterhoeft A."/>
            <person name="Ehrlich S.D."/>
            <person name="Emmerson P.T."/>
            <person name="Entian K.-D."/>
            <person name="Errington J."/>
            <person name="Fabret C."/>
            <person name="Ferrari E."/>
            <person name="Foulger D."/>
            <person name="Fritz C."/>
            <person name="Fujita M."/>
            <person name="Fujita Y."/>
            <person name="Fuma S."/>
            <person name="Galizzi A."/>
            <person name="Galleron N."/>
            <person name="Ghim S.-Y."/>
            <person name="Glaser P."/>
            <person name="Goffeau A."/>
            <person name="Golightly E.J."/>
            <person name="Grandi G."/>
            <person name="Guiseppi G."/>
            <person name="Guy B.J."/>
            <person name="Haga K."/>
            <person name="Haiech J."/>
            <person name="Harwood C.R."/>
            <person name="Henaut A."/>
            <person name="Hilbert H."/>
            <person name="Holsappel S."/>
            <person name="Hosono S."/>
            <person name="Hullo M.-F."/>
            <person name="Itaya M."/>
            <person name="Jones L.-M."/>
            <person name="Joris B."/>
            <person name="Karamata D."/>
            <person name="Kasahara Y."/>
            <person name="Klaerr-Blanchard M."/>
            <person name="Klein C."/>
            <person name="Kobayashi Y."/>
            <person name="Koetter P."/>
            <person name="Koningstein G."/>
            <person name="Krogh S."/>
            <person name="Kumano M."/>
            <person name="Kurita K."/>
            <person name="Lapidus A."/>
            <person name="Lardinois S."/>
            <person name="Lauber J."/>
            <person name="Lazarevic V."/>
            <person name="Lee S.-M."/>
            <person name="Levine A."/>
            <person name="Liu H."/>
            <person name="Masuda S."/>
            <person name="Mauel C."/>
            <person name="Medigue C."/>
            <person name="Medina N."/>
            <person name="Mellado R.P."/>
            <person name="Mizuno M."/>
            <person name="Moestl D."/>
            <person name="Nakai S."/>
            <person name="Noback M."/>
            <person name="Noone D."/>
            <person name="O'Reilly M."/>
            <person name="Ogawa K."/>
            <person name="Ogiwara A."/>
            <person name="Oudega B."/>
            <person name="Park S.-H."/>
            <person name="Parro V."/>
            <person name="Pohl T.M."/>
            <person name="Portetelle D."/>
            <person name="Porwollik S."/>
            <person name="Prescott A.M."/>
            <person name="Presecan E."/>
            <person name="Pujic P."/>
            <person name="Purnelle B."/>
            <person name="Rapoport G."/>
            <person name="Rey M."/>
            <person name="Reynolds S."/>
            <person name="Rieger M."/>
            <person name="Rivolta C."/>
            <person name="Rocha E."/>
            <person name="Roche B."/>
            <person name="Rose M."/>
            <person name="Sadaie Y."/>
            <person name="Sato T."/>
            <person name="Scanlan E."/>
            <person name="Schleich S."/>
            <person name="Schroeter R."/>
            <person name="Scoffone F."/>
            <person name="Sekiguchi J."/>
            <person name="Sekowska A."/>
            <person name="Seror S.J."/>
            <person name="Serror P."/>
            <person name="Shin B.-S."/>
            <person name="Soldo B."/>
            <person name="Sorokin A."/>
            <person name="Tacconi E."/>
            <person name="Takagi T."/>
            <person name="Takahashi H."/>
            <person name="Takemaru K."/>
            <person name="Takeuchi M."/>
            <person name="Tamakoshi A."/>
            <person name="Tanaka T."/>
            <person name="Terpstra P."/>
            <person name="Tognoni A."/>
            <person name="Tosato V."/>
            <person name="Uchiyama S."/>
            <person name="Vandenbol M."/>
            <person name="Vannier F."/>
            <person name="Vassarotti A."/>
            <person name="Viari A."/>
            <person name="Wambutt R."/>
            <person name="Wedler E."/>
            <person name="Wedler H."/>
            <person name="Weitzenegger T."/>
            <person name="Winters P."/>
            <person name="Wipat A."/>
            <person name="Yamamoto H."/>
            <person name="Yamane K."/>
            <person name="Yasumoto K."/>
            <person name="Yata K."/>
            <person name="Yoshida K."/>
            <person name="Yoshikawa H.-F."/>
            <person name="Zumstein E."/>
            <person name="Yoshikawa H."/>
            <person name="Danchin A."/>
        </authorList>
    </citation>
    <scope>NUCLEOTIDE SEQUENCE [LARGE SCALE GENOMIC DNA]</scope>
    <source>
        <strain>168</strain>
    </source>
</reference>
<reference key="4">
    <citation type="journal article" date="2009" name="Microbiology">
        <title>From a consortium sequence to a unified sequence: the Bacillus subtilis 168 reference genome a decade later.</title>
        <authorList>
            <person name="Barbe V."/>
            <person name="Cruveiller S."/>
            <person name="Kunst F."/>
            <person name="Lenoble P."/>
            <person name="Meurice G."/>
            <person name="Sekowska A."/>
            <person name="Vallenet D."/>
            <person name="Wang T."/>
            <person name="Moszer I."/>
            <person name="Medigue C."/>
            <person name="Danchin A."/>
        </authorList>
    </citation>
    <scope>SEQUENCE REVISION TO 102</scope>
</reference>
<evidence type="ECO:0000305" key="1"/>
<accession>P37523</accession>